<comment type="function">
    <text evidence="1 5">Seems to not be involved in heat resistance (By similarity). Unable to mediate restriction of long-distance movement of the pathogenic tobacco etch virus (TEV) without causing a hypersensitive response or inducing systemic acquired resistance.</text>
</comment>
<comment type="subcellular location">
    <subcellularLocation>
        <location evidence="1">Cell membrane</location>
        <topology evidence="1">Single-pass membrane protein</topology>
    </subcellularLocation>
    <text evidence="1">Present in sieve elements.</text>
</comment>
<comment type="similarity">
    <text evidence="3">Belongs to the small heat shock protein (HSP20) family.</text>
</comment>
<comment type="caution">
    <text evidence="6">Has been shown to be active in cv. Columbia (AC Q9M670) due to naturally occurring sequence variation in this strain. The sequence shown is from strains cv. Ge-1.</text>
</comment>
<dbReference type="EMBL" id="FR682072">
    <property type="protein sequence ID" value="CBW45883.1"/>
    <property type="molecule type" value="Genomic_DNA"/>
</dbReference>
<dbReference type="SMR" id="D9UC01"/>
<dbReference type="ExpressionAtlas" id="D9UC01">
    <property type="expression patterns" value="baseline and differential"/>
</dbReference>
<dbReference type="GO" id="GO:0005886">
    <property type="term" value="C:plasma membrane"/>
    <property type="evidence" value="ECO:0007669"/>
    <property type="project" value="UniProtKB-SubCell"/>
</dbReference>
<dbReference type="GO" id="GO:0006952">
    <property type="term" value="P:defense response"/>
    <property type="evidence" value="ECO:0007669"/>
    <property type="project" value="UniProtKB-KW"/>
</dbReference>
<dbReference type="CDD" id="cd06464">
    <property type="entry name" value="ACD_sHsps-like"/>
    <property type="match status" value="1"/>
</dbReference>
<dbReference type="Gene3D" id="2.60.40.790">
    <property type="match status" value="1"/>
</dbReference>
<dbReference type="InterPro" id="IPR002068">
    <property type="entry name" value="A-crystallin/Hsp20_dom"/>
</dbReference>
<dbReference type="InterPro" id="IPR008978">
    <property type="entry name" value="HSP20-like_chaperone"/>
</dbReference>
<dbReference type="PANTHER" id="PTHR43670">
    <property type="entry name" value="HEAT SHOCK PROTEIN 26"/>
    <property type="match status" value="1"/>
</dbReference>
<dbReference type="PANTHER" id="PTHR43670:SF121">
    <property type="entry name" value="PROTEIN RESTRICTED TEV MOVEMENT 2"/>
    <property type="match status" value="1"/>
</dbReference>
<dbReference type="Pfam" id="PF00011">
    <property type="entry name" value="HSP20"/>
    <property type="match status" value="1"/>
</dbReference>
<dbReference type="SUPFAM" id="SSF49764">
    <property type="entry name" value="HSP20-like chaperones"/>
    <property type="match status" value="1"/>
</dbReference>
<dbReference type="PROSITE" id="PS01031">
    <property type="entry name" value="SHSP"/>
    <property type="match status" value="1"/>
</dbReference>
<sequence>MAARQQQKGTGFGVQYEDFVPKSEWKDQPEATILNIDLTGFAKEQMKVTYVHSSKMIRVTGERPLANRKWNRFNEVFTVPQNCLVDKIHGSFKKNVLTITMPKETITKVAYLPETSRTEAAALEKAAKLEEKRLLEESRRKEKEEEEAKQMKKQLLEEKEALIRKLQEEAKAKEEAEMRKLQEEAKANEEAAAKKLQEEIEAKEKLEERKLEERRLEERKLEDMKLAEEAKLKKIQERKSVDESGEKEKILKPEVVYTKSGHVATPKPESGSGLKSGFGGVGEVVKSAEEKLGNLVEKEKKMGKGIMEKIRRKEITSEEKKLMMNVGVAALVIFALGAYVSYTFCSSSSSSSSSSPSSSSSSTKPE</sequence>
<name>RTM2D_ARATH</name>
<feature type="chain" id="PRO_0000429169" description="Inactive protein RESTRICTED TEV MOVEMENT 2">
    <location>
        <begin position="1"/>
        <end position="366"/>
    </location>
</feature>
<feature type="transmembrane region" description="Helical" evidence="2">
    <location>
        <begin position="322"/>
        <end position="342"/>
    </location>
</feature>
<feature type="domain" description="sHSP" evidence="3">
    <location>
        <begin position="14"/>
        <end position="121"/>
    </location>
</feature>
<feature type="repeat" description="A-1">
    <location>
        <begin position="129"/>
        <end position="133"/>
    </location>
</feature>
<feature type="repeat" description="A-2">
    <location>
        <begin position="135"/>
        <end position="139"/>
    </location>
</feature>
<feature type="repeat" description="A-3">
    <location>
        <begin position="156"/>
        <end position="160"/>
    </location>
</feature>
<feature type="repeat" description="B-1">
    <location>
        <begin position="163"/>
        <end position="176"/>
    </location>
</feature>
<feature type="repeat" description="B-2">
    <location>
        <begin position="178"/>
        <end position="191"/>
    </location>
</feature>
<feature type="repeat" description="B-3">
    <location>
        <begin position="193"/>
        <end position="205"/>
    </location>
</feature>
<feature type="repeat" description="A-4">
    <location>
        <begin position="206"/>
        <end position="210"/>
    </location>
</feature>
<feature type="repeat" description="A-5">
    <location>
        <begin position="211"/>
        <end position="215"/>
    </location>
</feature>
<feature type="repeat" description="A-6">
    <location>
        <begin position="216"/>
        <end position="220"/>
    </location>
</feature>
<feature type="region of interest" description="6 X 5 AA repeats A of L-E-E-[SKR]-[ERK]">
    <location>
        <begin position="129"/>
        <end position="220"/>
    </location>
</feature>
<feature type="region of interest" description="3 X 14 AA repeats B of [IMA]-[RK]-K-L-Q-E-E-A-K-A-K-E-[EK]-[LA]">
    <location>
        <begin position="163"/>
        <end position="206"/>
    </location>
</feature>
<feature type="region of interest" description="Disordered" evidence="4">
    <location>
        <begin position="345"/>
        <end position="366"/>
    </location>
</feature>
<feature type="compositionally biased region" description="Low complexity" evidence="4">
    <location>
        <begin position="346"/>
        <end position="366"/>
    </location>
</feature>
<protein>
    <recommendedName>
        <fullName>Inactive protein RESTRICTED TEV MOVEMENT 2</fullName>
    </recommendedName>
    <alternativeName>
        <fullName>Inactive restricted tobacco etch virus movement protein 2</fullName>
    </alternativeName>
</protein>
<accession>D9UC01</accession>
<proteinExistence type="inferred from homology"/>
<organism>
    <name type="scientific">Arabidopsis thaliana</name>
    <name type="common">Mouse-ear cress</name>
    <dbReference type="NCBI Taxonomy" id="3702"/>
    <lineage>
        <taxon>Eukaryota</taxon>
        <taxon>Viridiplantae</taxon>
        <taxon>Streptophyta</taxon>
        <taxon>Embryophyta</taxon>
        <taxon>Tracheophyta</taxon>
        <taxon>Spermatophyta</taxon>
        <taxon>Magnoliopsida</taxon>
        <taxon>eudicotyledons</taxon>
        <taxon>Gunneridae</taxon>
        <taxon>Pentapetalae</taxon>
        <taxon>rosids</taxon>
        <taxon>malvids</taxon>
        <taxon>Brassicales</taxon>
        <taxon>Brassicaceae</taxon>
        <taxon>Camelineae</taxon>
        <taxon>Arabidopsis</taxon>
    </lineage>
</organism>
<keyword id="KW-1003">Cell membrane</keyword>
<keyword id="KW-0472">Membrane</keyword>
<keyword id="KW-0611">Plant defense</keyword>
<keyword id="KW-0677">Repeat</keyword>
<keyword id="KW-0812">Transmembrane</keyword>
<keyword id="KW-1133">Transmembrane helix</keyword>
<evidence type="ECO:0000250" key="1"/>
<evidence type="ECO:0000255" key="2"/>
<evidence type="ECO:0000255" key="3">
    <source>
        <dbReference type="PROSITE-ProRule" id="PRU00285"/>
    </source>
</evidence>
<evidence type="ECO:0000256" key="4">
    <source>
        <dbReference type="SAM" id="MobiDB-lite"/>
    </source>
</evidence>
<evidence type="ECO:0000269" key="5">
    <source>
    </source>
</evidence>
<evidence type="ECO:0000305" key="6"/>
<reference key="1">
    <citation type="journal article" date="2012" name="PLoS ONE">
        <title>The RTM resistance to potyviruses in Arabidopsis thaliana: natural variation of the RTM genes and evidence for the implication of additional genes.</title>
        <authorList>
            <person name="Cosson P."/>
            <person name="Schurdi-Levraud V."/>
            <person name="Le Q.H."/>
            <person name="Sicard O."/>
            <person name="Caballero M."/>
            <person name="Roux F."/>
            <person name="Le Gall O."/>
            <person name="Candresse T."/>
            <person name="Revers F."/>
        </authorList>
    </citation>
    <scope>NUCLEOTIDE SEQUENCE [GENOMIC DNA]</scope>
    <scope>FUNCTION</scope>
    <source>
        <strain>cv. Ge-1</strain>
        <tissue>Leaf</tissue>
    </source>
</reference>
<gene>
    <name type="primary">RTM2</name>
</gene>